<comment type="subcellular location">
    <subcellularLocation>
        <location evidence="2">Virion</location>
    </subcellularLocation>
</comment>
<comment type="induction">
    <text evidence="3">Expressed in the late phase of the viral replicative cycle.</text>
</comment>
<comment type="similarity">
    <text evidence="4">Belongs to the asfivirus I177L family.</text>
</comment>
<comment type="sequence caution" evidence="3">
    <conflict type="erroneous gene model prediction">
        <sequence resource="EMBL-CDS" id="AAA42705"/>
    </conflict>
</comment>
<comment type="sequence caution" evidence="3">
    <conflict type="erroneous gene model prediction">
        <sequence resource="EMBL-CDS" id="AAA65371"/>
    </conflict>
</comment>
<organism>
    <name type="scientific">African swine fever virus (strain Badajoz 1971 Vero-adapted)</name>
    <name type="common">Ba71V</name>
    <name type="synonym">ASFV</name>
    <dbReference type="NCBI Taxonomy" id="10498"/>
    <lineage>
        <taxon>Viruses</taxon>
        <taxon>Varidnaviria</taxon>
        <taxon>Bamfordvirae</taxon>
        <taxon>Nucleocytoviricota</taxon>
        <taxon>Pokkesviricetes</taxon>
        <taxon>Asfuvirales</taxon>
        <taxon>Asfarviridae</taxon>
        <taxon>Asfivirus</taxon>
        <taxon>African swine fever virus</taxon>
    </lineage>
</organism>
<gene>
    <name type="ordered locus">BA71V-145</name>
    <name type="ORF">I177L</name>
</gene>
<sequence length="66" mass="7731">MWKVNDQGFLNITVTGTKFNLIAITGKLGFYTDPPSHLMIMPLKIFPVHKFSKNEPNKKQKRFIYF</sequence>
<organismHost>
    <name type="scientific">Ornithodoros</name>
    <name type="common">relapsing fever ticks</name>
    <dbReference type="NCBI Taxonomy" id="6937"/>
</organismHost>
<organismHost>
    <name type="scientific">Sus scrofa</name>
    <name type="common">Pig</name>
    <dbReference type="NCBI Taxonomy" id="9823"/>
</organismHost>
<evidence type="ECO:0000255" key="1"/>
<evidence type="ECO:0000269" key="2">
    <source>
    </source>
</evidence>
<evidence type="ECO:0000269" key="3">
    <source>
    </source>
</evidence>
<evidence type="ECO:0000305" key="4"/>
<dbReference type="EMBL" id="U18466">
    <property type="protein sequence ID" value="AAA65371.1"/>
    <property type="status" value="ALT_INIT"/>
    <property type="molecule type" value="Genomic_DNA"/>
</dbReference>
<dbReference type="EMBL" id="M77121">
    <property type="protein sequence ID" value="AAA42705.1"/>
    <property type="status" value="ALT_INIT"/>
    <property type="molecule type" value="Genomic_DNA"/>
</dbReference>
<dbReference type="PIR" id="G39448">
    <property type="entry name" value="WMXFB6"/>
</dbReference>
<dbReference type="RefSeq" id="NP_042835.1">
    <property type="nucleotide sequence ID" value="NC_001659.2"/>
</dbReference>
<dbReference type="GeneID" id="22220371"/>
<dbReference type="KEGG" id="vg:22220371"/>
<dbReference type="Proteomes" id="UP000000624">
    <property type="component" value="Segment"/>
</dbReference>
<dbReference type="GO" id="GO:0044423">
    <property type="term" value="C:virion component"/>
    <property type="evidence" value="ECO:0007669"/>
    <property type="project" value="UniProtKB-KW"/>
</dbReference>
<reference key="1">
    <citation type="journal article" date="1992" name="Virology">
        <title>Genes homologous to ubiquitin-conjugating proteins and eukaryotic transcription factor SII in African swine fever virus.</title>
        <authorList>
            <person name="Rodriguez J.M."/>
            <person name="Salas M.L."/>
            <person name="Vinuela E."/>
        </authorList>
    </citation>
    <scope>NUCLEOTIDE SEQUENCE [GENOMIC DNA]</scope>
</reference>
<reference key="2">
    <citation type="journal article" date="2018" name="J. Virol.">
        <title>A Proteomic Atlas of the African Swine Fever Virus Particle.</title>
        <authorList>
            <person name="Alejo A."/>
            <person name="Matamoros T."/>
            <person name="Guerra M."/>
            <person name="Andres G."/>
        </authorList>
    </citation>
    <scope>SUBCELLULAR LOCATION</scope>
</reference>
<reference key="3">
    <citation type="journal article" date="2020" name="J. Virol.">
        <title>The African Swine Fever Virus Transcriptome.</title>
        <authorList>
            <person name="Cackett G."/>
            <person name="Matelska D."/>
            <person name="Sykora M."/>
            <person name="Portugal R."/>
            <person name="Malecki M."/>
            <person name="Baehler J."/>
            <person name="Dixon L."/>
            <person name="Werner F."/>
        </authorList>
    </citation>
    <scope>INDUCTION</scope>
    <scope>IDENTIFICATION OF N-TERMINUS</scope>
</reference>
<keyword id="KW-0325">Glycoprotein</keyword>
<keyword id="KW-0426">Late protein</keyword>
<keyword id="KW-1185">Reference proteome</keyword>
<keyword id="KW-0946">Virion</keyword>
<proteinExistence type="evidence at transcript level"/>
<name>VF177_ASFB7</name>
<accession>P27942</accession>
<protein>
    <recommendedName>
        <fullName>Protein I177L</fullName>
    </recommendedName>
</protein>
<feature type="chain" id="PRO_0000221956" description="Protein I177L">
    <location>
        <begin position="1"/>
        <end position="66"/>
    </location>
</feature>
<feature type="glycosylation site" description="N-linked (GlcNAc...) asparagine; by host" evidence="1">
    <location>
        <position position="11"/>
    </location>
</feature>